<sequence length="453" mass="47449">MDYANRHVTVVGLGGSGLAAARYLAAHGARVRVADANPSAERLAELERCLPGVEVMVGAFDDATFAGAELLVVSPGVPLANPAIAAFRRAGGEVVGDIEILARAIQGDGSKVIAITGSNGKSTVTSLVGHLCEAAGLDTVVAGNIGLAVLEALLAREQSGKRPDVWVLELSSFQLESTFSLAADAATVLNISEDHLDRYADLLDYAHAKTRVFNGKGVQVLNKDDALVRAMVRPGHPVKWFSLNGAADYALARNGGYWLKVDGEKVFDCADMQLQGLHNAANALAALGLCQGIGLPLEKLLDGLKTFRGLAHRVELVDEFDGIAFIDDSKGTNVGATEAALNGMTRQVVLIAGGDGKGQDFAPLKPACQRIARAVLLIGRDAGRIEAALEDSGLALERCDTLEEATRRAAALARPGDVVLLSPACASLDMFKNYAHRAQVFIDTVAAVKAARA</sequence>
<reference key="1">
    <citation type="journal article" date="2003" name="Proc. Natl. Acad. Sci. U.S.A.">
        <title>The complete genome sequence of Chromobacterium violaceum reveals remarkable and exploitable bacterial adaptability.</title>
        <authorList>
            <person name="Vasconcelos A.T.R."/>
            <person name="de Almeida D.F."/>
            <person name="Hungria M."/>
            <person name="Guimaraes C.T."/>
            <person name="Antonio R.V."/>
            <person name="Almeida F.C."/>
            <person name="de Almeida L.G.P."/>
            <person name="de Almeida R."/>
            <person name="Alves-Gomes J.A."/>
            <person name="Andrade E.M."/>
            <person name="Araripe J."/>
            <person name="de Araujo M.F.F."/>
            <person name="Astolfi-Filho S."/>
            <person name="Azevedo V."/>
            <person name="Baptista A.J."/>
            <person name="Bataus L.A.M."/>
            <person name="Batista J.S."/>
            <person name="Belo A."/>
            <person name="van den Berg C."/>
            <person name="Bogo M."/>
            <person name="Bonatto S."/>
            <person name="Bordignon J."/>
            <person name="Brigido M.M."/>
            <person name="Brito C.A."/>
            <person name="Brocchi M."/>
            <person name="Burity H.A."/>
            <person name="Camargo A.A."/>
            <person name="Cardoso D.D.P."/>
            <person name="Carneiro N.P."/>
            <person name="Carraro D.M."/>
            <person name="Carvalho C.M.B."/>
            <person name="Cascardo J.C.M."/>
            <person name="Cavada B.S."/>
            <person name="Chueire L.M.O."/>
            <person name="Creczynski-Pasa T.B."/>
            <person name="Cunha-Junior N.C."/>
            <person name="Fagundes N."/>
            <person name="Falcao C.L."/>
            <person name="Fantinatti F."/>
            <person name="Farias I.P."/>
            <person name="Felipe M.S.S."/>
            <person name="Ferrari L.P."/>
            <person name="Ferro J.A."/>
            <person name="Ferro M.I.T."/>
            <person name="Franco G.R."/>
            <person name="Freitas N.S.A."/>
            <person name="Furlan L.R."/>
            <person name="Gazzinelli R.T."/>
            <person name="Gomes E.A."/>
            <person name="Goncalves P.R."/>
            <person name="Grangeiro T.B."/>
            <person name="Grattapaglia D."/>
            <person name="Grisard E.C."/>
            <person name="Hanna E.S."/>
            <person name="Jardim S.N."/>
            <person name="Laurino J."/>
            <person name="Leoi L.C.T."/>
            <person name="Lima L.F.A."/>
            <person name="Loureiro M.F."/>
            <person name="Lyra M.C.C.P."/>
            <person name="Madeira H.M.F."/>
            <person name="Manfio G.P."/>
            <person name="Maranhao A.Q."/>
            <person name="Martins W.S."/>
            <person name="di Mauro S.M.Z."/>
            <person name="de Medeiros S.R.B."/>
            <person name="Meissner R.V."/>
            <person name="Moreira M.A.M."/>
            <person name="Nascimento F.F."/>
            <person name="Nicolas M.F."/>
            <person name="Oliveira J.G."/>
            <person name="Oliveira S.C."/>
            <person name="Paixao R.F.C."/>
            <person name="Parente J.A."/>
            <person name="Pedrosa F.O."/>
            <person name="Pena S.D.J."/>
            <person name="Pereira J.O."/>
            <person name="Pereira M."/>
            <person name="Pinto L.S.R.C."/>
            <person name="Pinto L.S."/>
            <person name="Porto J.I.R."/>
            <person name="Potrich D.P."/>
            <person name="Ramalho-Neto C.E."/>
            <person name="Reis A.M.M."/>
            <person name="Rigo L.U."/>
            <person name="Rondinelli E."/>
            <person name="Santos E.B.P."/>
            <person name="Santos F.R."/>
            <person name="Schneider M.P.C."/>
            <person name="Seuanez H.N."/>
            <person name="Silva A.M.R."/>
            <person name="da Silva A.L.C."/>
            <person name="Silva D.W."/>
            <person name="Silva R."/>
            <person name="Simoes I.C."/>
            <person name="Simon D."/>
            <person name="Soares C.M.A."/>
            <person name="Soares R.B.A."/>
            <person name="Souza E.M."/>
            <person name="Souza K.R.L."/>
            <person name="Souza R.C."/>
            <person name="Steffens M.B.R."/>
            <person name="Steindel M."/>
            <person name="Teixeira S.R."/>
            <person name="Urmenyi T."/>
            <person name="Vettore A."/>
            <person name="Wassem R."/>
            <person name="Zaha A."/>
            <person name="Simpson A.J.G."/>
        </authorList>
    </citation>
    <scope>NUCLEOTIDE SEQUENCE [LARGE SCALE GENOMIC DNA]</scope>
    <source>
        <strain>ATCC 12472 / DSM 30191 / JCM 1249 / CCUG 213 / NBRC 12614 / NCIMB 9131 / NCTC 9757 / MK</strain>
    </source>
</reference>
<organism>
    <name type="scientific">Chromobacterium violaceum (strain ATCC 12472 / DSM 30191 / JCM 1249 / CCUG 213 / NBRC 12614 / NCIMB 9131 / NCTC 9757 / MK)</name>
    <dbReference type="NCBI Taxonomy" id="243365"/>
    <lineage>
        <taxon>Bacteria</taxon>
        <taxon>Pseudomonadati</taxon>
        <taxon>Pseudomonadota</taxon>
        <taxon>Betaproteobacteria</taxon>
        <taxon>Neisseriales</taxon>
        <taxon>Chromobacteriaceae</taxon>
        <taxon>Chromobacterium</taxon>
    </lineage>
</organism>
<dbReference type="EC" id="6.3.2.9" evidence="1"/>
<dbReference type="EMBL" id="AE016825">
    <property type="protein sequence ID" value="AAQ62004.1"/>
    <property type="molecule type" value="Genomic_DNA"/>
</dbReference>
<dbReference type="RefSeq" id="WP_011137891.1">
    <property type="nucleotide sequence ID" value="NC_005085.1"/>
</dbReference>
<dbReference type="SMR" id="Q7NPZ7"/>
<dbReference type="STRING" id="243365.CV_4345"/>
<dbReference type="KEGG" id="cvi:CV_4345"/>
<dbReference type="eggNOG" id="COG0771">
    <property type="taxonomic scope" value="Bacteria"/>
</dbReference>
<dbReference type="HOGENOM" id="CLU_032540_1_0_4"/>
<dbReference type="OrthoDB" id="9809796at2"/>
<dbReference type="UniPathway" id="UPA00219"/>
<dbReference type="Proteomes" id="UP000001424">
    <property type="component" value="Chromosome"/>
</dbReference>
<dbReference type="GO" id="GO:0005737">
    <property type="term" value="C:cytoplasm"/>
    <property type="evidence" value="ECO:0007669"/>
    <property type="project" value="UniProtKB-SubCell"/>
</dbReference>
<dbReference type="GO" id="GO:0005524">
    <property type="term" value="F:ATP binding"/>
    <property type="evidence" value="ECO:0007669"/>
    <property type="project" value="UniProtKB-UniRule"/>
</dbReference>
<dbReference type="GO" id="GO:0008764">
    <property type="term" value="F:UDP-N-acetylmuramoylalanine-D-glutamate ligase activity"/>
    <property type="evidence" value="ECO:0007669"/>
    <property type="project" value="UniProtKB-UniRule"/>
</dbReference>
<dbReference type="GO" id="GO:0051301">
    <property type="term" value="P:cell division"/>
    <property type="evidence" value="ECO:0007669"/>
    <property type="project" value="UniProtKB-KW"/>
</dbReference>
<dbReference type="GO" id="GO:0071555">
    <property type="term" value="P:cell wall organization"/>
    <property type="evidence" value="ECO:0007669"/>
    <property type="project" value="UniProtKB-KW"/>
</dbReference>
<dbReference type="GO" id="GO:0009252">
    <property type="term" value="P:peptidoglycan biosynthetic process"/>
    <property type="evidence" value="ECO:0007669"/>
    <property type="project" value="UniProtKB-UniRule"/>
</dbReference>
<dbReference type="GO" id="GO:0008360">
    <property type="term" value="P:regulation of cell shape"/>
    <property type="evidence" value="ECO:0007669"/>
    <property type="project" value="UniProtKB-KW"/>
</dbReference>
<dbReference type="Gene3D" id="3.90.190.20">
    <property type="entry name" value="Mur ligase, C-terminal domain"/>
    <property type="match status" value="1"/>
</dbReference>
<dbReference type="Gene3D" id="3.40.1190.10">
    <property type="entry name" value="Mur-like, catalytic domain"/>
    <property type="match status" value="1"/>
</dbReference>
<dbReference type="Gene3D" id="3.40.50.720">
    <property type="entry name" value="NAD(P)-binding Rossmann-like Domain"/>
    <property type="match status" value="1"/>
</dbReference>
<dbReference type="HAMAP" id="MF_00639">
    <property type="entry name" value="MurD"/>
    <property type="match status" value="1"/>
</dbReference>
<dbReference type="InterPro" id="IPR036565">
    <property type="entry name" value="Mur-like_cat_sf"/>
</dbReference>
<dbReference type="InterPro" id="IPR004101">
    <property type="entry name" value="Mur_ligase_C"/>
</dbReference>
<dbReference type="InterPro" id="IPR036615">
    <property type="entry name" value="Mur_ligase_C_dom_sf"/>
</dbReference>
<dbReference type="InterPro" id="IPR013221">
    <property type="entry name" value="Mur_ligase_cen"/>
</dbReference>
<dbReference type="InterPro" id="IPR005762">
    <property type="entry name" value="MurD"/>
</dbReference>
<dbReference type="NCBIfam" id="TIGR01087">
    <property type="entry name" value="murD"/>
    <property type="match status" value="1"/>
</dbReference>
<dbReference type="PANTHER" id="PTHR43692">
    <property type="entry name" value="UDP-N-ACETYLMURAMOYLALANINE--D-GLUTAMATE LIGASE"/>
    <property type="match status" value="1"/>
</dbReference>
<dbReference type="PANTHER" id="PTHR43692:SF1">
    <property type="entry name" value="UDP-N-ACETYLMURAMOYLALANINE--D-GLUTAMATE LIGASE"/>
    <property type="match status" value="1"/>
</dbReference>
<dbReference type="Pfam" id="PF02875">
    <property type="entry name" value="Mur_ligase_C"/>
    <property type="match status" value="1"/>
</dbReference>
<dbReference type="Pfam" id="PF08245">
    <property type="entry name" value="Mur_ligase_M"/>
    <property type="match status" value="1"/>
</dbReference>
<dbReference type="Pfam" id="PF21799">
    <property type="entry name" value="MurD-like_N"/>
    <property type="match status" value="1"/>
</dbReference>
<dbReference type="SUPFAM" id="SSF51984">
    <property type="entry name" value="MurCD N-terminal domain"/>
    <property type="match status" value="1"/>
</dbReference>
<dbReference type="SUPFAM" id="SSF53623">
    <property type="entry name" value="MurD-like peptide ligases, catalytic domain"/>
    <property type="match status" value="1"/>
</dbReference>
<dbReference type="SUPFAM" id="SSF53244">
    <property type="entry name" value="MurD-like peptide ligases, peptide-binding domain"/>
    <property type="match status" value="1"/>
</dbReference>
<accession>Q7NPZ7</accession>
<feature type="chain" id="PRO_0000108998" description="UDP-N-acetylmuramoylalanine--D-glutamate ligase">
    <location>
        <begin position="1"/>
        <end position="453"/>
    </location>
</feature>
<feature type="binding site" evidence="1">
    <location>
        <begin position="117"/>
        <end position="123"/>
    </location>
    <ligand>
        <name>ATP</name>
        <dbReference type="ChEBI" id="CHEBI:30616"/>
    </ligand>
</feature>
<name>MURD_CHRVO</name>
<evidence type="ECO:0000255" key="1">
    <source>
        <dbReference type="HAMAP-Rule" id="MF_00639"/>
    </source>
</evidence>
<gene>
    <name evidence="1" type="primary">murD</name>
    <name type="ordered locus">CV_4345</name>
</gene>
<keyword id="KW-0067">ATP-binding</keyword>
<keyword id="KW-0131">Cell cycle</keyword>
<keyword id="KW-0132">Cell division</keyword>
<keyword id="KW-0133">Cell shape</keyword>
<keyword id="KW-0961">Cell wall biogenesis/degradation</keyword>
<keyword id="KW-0963">Cytoplasm</keyword>
<keyword id="KW-0436">Ligase</keyword>
<keyword id="KW-0547">Nucleotide-binding</keyword>
<keyword id="KW-0573">Peptidoglycan synthesis</keyword>
<keyword id="KW-1185">Reference proteome</keyword>
<proteinExistence type="inferred from homology"/>
<comment type="function">
    <text evidence="1">Cell wall formation. Catalyzes the addition of glutamate to the nucleotide precursor UDP-N-acetylmuramoyl-L-alanine (UMA).</text>
</comment>
<comment type="catalytic activity">
    <reaction evidence="1">
        <text>UDP-N-acetyl-alpha-D-muramoyl-L-alanine + D-glutamate + ATP = UDP-N-acetyl-alpha-D-muramoyl-L-alanyl-D-glutamate + ADP + phosphate + H(+)</text>
        <dbReference type="Rhea" id="RHEA:16429"/>
        <dbReference type="ChEBI" id="CHEBI:15378"/>
        <dbReference type="ChEBI" id="CHEBI:29986"/>
        <dbReference type="ChEBI" id="CHEBI:30616"/>
        <dbReference type="ChEBI" id="CHEBI:43474"/>
        <dbReference type="ChEBI" id="CHEBI:83898"/>
        <dbReference type="ChEBI" id="CHEBI:83900"/>
        <dbReference type="ChEBI" id="CHEBI:456216"/>
        <dbReference type="EC" id="6.3.2.9"/>
    </reaction>
</comment>
<comment type="pathway">
    <text evidence="1">Cell wall biogenesis; peptidoglycan biosynthesis.</text>
</comment>
<comment type="subcellular location">
    <subcellularLocation>
        <location evidence="1">Cytoplasm</location>
    </subcellularLocation>
</comment>
<comment type="similarity">
    <text evidence="1">Belongs to the MurCDEF family.</text>
</comment>
<protein>
    <recommendedName>
        <fullName evidence="1">UDP-N-acetylmuramoylalanine--D-glutamate ligase</fullName>
        <ecNumber evidence="1">6.3.2.9</ecNumber>
    </recommendedName>
    <alternativeName>
        <fullName evidence="1">D-glutamic acid-adding enzyme</fullName>
    </alternativeName>
    <alternativeName>
        <fullName evidence="1">UDP-N-acetylmuramoyl-L-alanyl-D-glutamate synthetase</fullName>
    </alternativeName>
</protein>